<evidence type="ECO:0000250" key="1"/>
<evidence type="ECO:0000255" key="2">
    <source>
        <dbReference type="HAMAP-Rule" id="MF_00118"/>
    </source>
</evidence>
<evidence type="ECO:0000305" key="3"/>
<reference key="1">
    <citation type="journal article" date="2006" name="BMC Biol.">
        <title>The complete chloroplast DNA sequence of the green alga Oltmannsiellopsis viridis reveals a distinctive quadripartite architecture in the chloroplast genome of early diverging ulvophytes.</title>
        <authorList>
            <person name="Pombert J.-F."/>
            <person name="Lemieux C."/>
            <person name="Turmel M."/>
        </authorList>
    </citation>
    <scope>NUCLEOTIDE SEQUENCE [LARGE SCALE GENOMIC DNA]</scope>
</reference>
<feature type="chain" id="PRO_0000275377" description="Elongation factor Tu, chloroplastic">
    <location>
        <begin position="1"/>
        <end position="410"/>
    </location>
</feature>
<feature type="domain" description="tr-type G">
    <location>
        <begin position="10"/>
        <end position="215"/>
    </location>
</feature>
<feature type="region of interest" description="G1" evidence="1">
    <location>
        <begin position="19"/>
        <end position="26"/>
    </location>
</feature>
<feature type="region of interest" description="G2" evidence="1">
    <location>
        <begin position="61"/>
        <end position="65"/>
    </location>
</feature>
<feature type="region of interest" description="G3" evidence="1">
    <location>
        <begin position="82"/>
        <end position="85"/>
    </location>
</feature>
<feature type="region of interest" description="G4" evidence="1">
    <location>
        <begin position="137"/>
        <end position="140"/>
    </location>
</feature>
<feature type="region of interest" description="G5" evidence="1">
    <location>
        <begin position="175"/>
        <end position="177"/>
    </location>
</feature>
<feature type="binding site" evidence="1">
    <location>
        <begin position="19"/>
        <end position="26"/>
    </location>
    <ligand>
        <name>GTP</name>
        <dbReference type="ChEBI" id="CHEBI:37565"/>
    </ligand>
</feature>
<feature type="binding site" evidence="2">
    <location>
        <position position="26"/>
    </location>
    <ligand>
        <name>Mg(2+)</name>
        <dbReference type="ChEBI" id="CHEBI:18420"/>
    </ligand>
</feature>
<feature type="binding site" evidence="1">
    <location>
        <begin position="82"/>
        <end position="86"/>
    </location>
    <ligand>
        <name>GTP</name>
        <dbReference type="ChEBI" id="CHEBI:37565"/>
    </ligand>
</feature>
<feature type="binding site" evidence="1">
    <location>
        <begin position="137"/>
        <end position="140"/>
    </location>
    <ligand>
        <name>GTP</name>
        <dbReference type="ChEBI" id="CHEBI:37565"/>
    </ligand>
</feature>
<sequence>MAREKFERSKPHVNIGTIGHVDHGKTTLTAAITMAMSVFSGAGAGKKYDEIDSAPEEKARGITINTAHVEYETENRHYAHVDCPGHADYVKNMITGAAQMDGAILVVSGADGPMPQTKEHLLLAKQVGVPKIVVFLNKKDQVDDDELLELVELEVRETLDNYEFDGDDIPIIPGSALLALEALIESPEAKKGDNEWVDCIYSLMENVDSYIPTPERDTDKPFLMAVEDVFSITGRGTVATGRVERGVVKIGDTVELVGLKDTTETTVTGLEMFQKTLDESVAGDNVGILLRGVQKENIQRGMVLAKPGSISPHTKFEAQVYVLTKEEGGRHTPFFPGYRPQFYVRTTDVTGKIESFVADDGSASQMVMPGDRVKMLVELINPIAVEKGMRFAIREGGRTVGAGVVSEILA</sequence>
<protein>
    <recommendedName>
        <fullName>Elongation factor Tu, chloroplastic</fullName>
        <shortName>EF-Tu</shortName>
        <ecNumber evidence="2">3.6.5.3</ecNumber>
    </recommendedName>
</protein>
<proteinExistence type="inferred from homology"/>
<organism>
    <name type="scientific">Oltmannsiellopsis viridis</name>
    <name type="common">Marine flagellate</name>
    <name type="synonym">Oltmannsiella viridis</name>
    <dbReference type="NCBI Taxonomy" id="51324"/>
    <lineage>
        <taxon>Eukaryota</taxon>
        <taxon>Viridiplantae</taxon>
        <taxon>Chlorophyta</taxon>
        <taxon>Ulvophyceae</taxon>
        <taxon>Oltmannsiellopsidales</taxon>
        <taxon>Oltmannsiellopsidaceae</taxon>
        <taxon>Oltmannsiellopsis</taxon>
    </lineage>
</organism>
<keyword id="KW-0150">Chloroplast</keyword>
<keyword id="KW-0251">Elongation factor</keyword>
<keyword id="KW-0342">GTP-binding</keyword>
<keyword id="KW-0378">Hydrolase</keyword>
<keyword id="KW-0460">Magnesium</keyword>
<keyword id="KW-0479">Metal-binding</keyword>
<keyword id="KW-0547">Nucleotide-binding</keyword>
<keyword id="KW-0934">Plastid</keyword>
<keyword id="KW-0648">Protein biosynthesis</keyword>
<dbReference type="EC" id="3.6.5.3" evidence="2"/>
<dbReference type="EMBL" id="DQ291132">
    <property type="protein sequence ID" value="ABB81968.1"/>
    <property type="molecule type" value="Genomic_DNA"/>
</dbReference>
<dbReference type="RefSeq" id="YP_635900.1">
    <property type="nucleotide sequence ID" value="NC_008099.1"/>
</dbReference>
<dbReference type="SMR" id="Q20EU5"/>
<dbReference type="GeneID" id="4100086"/>
<dbReference type="GO" id="GO:0009507">
    <property type="term" value="C:chloroplast"/>
    <property type="evidence" value="ECO:0007669"/>
    <property type="project" value="UniProtKB-SubCell"/>
</dbReference>
<dbReference type="GO" id="GO:0005739">
    <property type="term" value="C:mitochondrion"/>
    <property type="evidence" value="ECO:0007669"/>
    <property type="project" value="TreeGrafter"/>
</dbReference>
<dbReference type="GO" id="GO:0005525">
    <property type="term" value="F:GTP binding"/>
    <property type="evidence" value="ECO:0007669"/>
    <property type="project" value="UniProtKB-UniRule"/>
</dbReference>
<dbReference type="GO" id="GO:0003924">
    <property type="term" value="F:GTPase activity"/>
    <property type="evidence" value="ECO:0007669"/>
    <property type="project" value="InterPro"/>
</dbReference>
<dbReference type="GO" id="GO:0003746">
    <property type="term" value="F:translation elongation factor activity"/>
    <property type="evidence" value="ECO:0007669"/>
    <property type="project" value="UniProtKB-UniRule"/>
</dbReference>
<dbReference type="GO" id="GO:0070125">
    <property type="term" value="P:mitochondrial translational elongation"/>
    <property type="evidence" value="ECO:0007669"/>
    <property type="project" value="TreeGrafter"/>
</dbReference>
<dbReference type="CDD" id="cd01884">
    <property type="entry name" value="EF_Tu"/>
    <property type="match status" value="1"/>
</dbReference>
<dbReference type="CDD" id="cd03697">
    <property type="entry name" value="EFTU_II"/>
    <property type="match status" value="1"/>
</dbReference>
<dbReference type="CDD" id="cd03707">
    <property type="entry name" value="EFTU_III"/>
    <property type="match status" value="1"/>
</dbReference>
<dbReference type="FunFam" id="2.40.30.10:FF:000001">
    <property type="entry name" value="Elongation factor Tu"/>
    <property type="match status" value="1"/>
</dbReference>
<dbReference type="FunFam" id="2.40.30.10:FF:000046">
    <property type="entry name" value="Elongation factor Tu"/>
    <property type="match status" value="1"/>
</dbReference>
<dbReference type="FunFam" id="3.40.50.300:FF:000003">
    <property type="entry name" value="Elongation factor Tu"/>
    <property type="match status" value="1"/>
</dbReference>
<dbReference type="Gene3D" id="3.40.50.300">
    <property type="entry name" value="P-loop containing nucleotide triphosphate hydrolases"/>
    <property type="match status" value="1"/>
</dbReference>
<dbReference type="Gene3D" id="2.40.30.10">
    <property type="entry name" value="Translation factors"/>
    <property type="match status" value="2"/>
</dbReference>
<dbReference type="HAMAP" id="MF_00118_B">
    <property type="entry name" value="EF_Tu_B"/>
    <property type="match status" value="1"/>
</dbReference>
<dbReference type="InterPro" id="IPR041709">
    <property type="entry name" value="EF-Tu_GTP-bd"/>
</dbReference>
<dbReference type="InterPro" id="IPR050055">
    <property type="entry name" value="EF-Tu_GTPase"/>
</dbReference>
<dbReference type="InterPro" id="IPR004161">
    <property type="entry name" value="EFTu-like_2"/>
</dbReference>
<dbReference type="InterPro" id="IPR033720">
    <property type="entry name" value="EFTU_2"/>
</dbReference>
<dbReference type="InterPro" id="IPR031157">
    <property type="entry name" value="G_TR_CS"/>
</dbReference>
<dbReference type="InterPro" id="IPR027417">
    <property type="entry name" value="P-loop_NTPase"/>
</dbReference>
<dbReference type="InterPro" id="IPR005225">
    <property type="entry name" value="Small_GTP-bd"/>
</dbReference>
<dbReference type="InterPro" id="IPR000795">
    <property type="entry name" value="T_Tr_GTP-bd_dom"/>
</dbReference>
<dbReference type="InterPro" id="IPR009000">
    <property type="entry name" value="Transl_B-barrel_sf"/>
</dbReference>
<dbReference type="InterPro" id="IPR009001">
    <property type="entry name" value="Transl_elong_EF1A/Init_IF2_C"/>
</dbReference>
<dbReference type="InterPro" id="IPR004541">
    <property type="entry name" value="Transl_elong_EFTu/EF1A_bac/org"/>
</dbReference>
<dbReference type="InterPro" id="IPR004160">
    <property type="entry name" value="Transl_elong_EFTu/EF1A_C"/>
</dbReference>
<dbReference type="NCBIfam" id="TIGR00485">
    <property type="entry name" value="EF-Tu"/>
    <property type="match status" value="1"/>
</dbReference>
<dbReference type="NCBIfam" id="NF000766">
    <property type="entry name" value="PRK00049.1"/>
    <property type="match status" value="1"/>
</dbReference>
<dbReference type="NCBIfam" id="NF009372">
    <property type="entry name" value="PRK12735.1"/>
    <property type="match status" value="1"/>
</dbReference>
<dbReference type="NCBIfam" id="NF009373">
    <property type="entry name" value="PRK12736.1"/>
    <property type="match status" value="1"/>
</dbReference>
<dbReference type="NCBIfam" id="TIGR00231">
    <property type="entry name" value="small_GTP"/>
    <property type="match status" value="1"/>
</dbReference>
<dbReference type="PANTHER" id="PTHR43721:SF5">
    <property type="entry name" value="ELONGATION FACTOR TU, CHLOROPLASTIC"/>
    <property type="match status" value="1"/>
</dbReference>
<dbReference type="PANTHER" id="PTHR43721">
    <property type="entry name" value="ELONGATION FACTOR TU-RELATED"/>
    <property type="match status" value="1"/>
</dbReference>
<dbReference type="Pfam" id="PF00009">
    <property type="entry name" value="GTP_EFTU"/>
    <property type="match status" value="1"/>
</dbReference>
<dbReference type="Pfam" id="PF03144">
    <property type="entry name" value="GTP_EFTU_D2"/>
    <property type="match status" value="1"/>
</dbReference>
<dbReference type="Pfam" id="PF03143">
    <property type="entry name" value="GTP_EFTU_D3"/>
    <property type="match status" value="1"/>
</dbReference>
<dbReference type="PRINTS" id="PR00315">
    <property type="entry name" value="ELONGATNFCT"/>
</dbReference>
<dbReference type="SUPFAM" id="SSF50465">
    <property type="entry name" value="EF-Tu/eEF-1alpha/eIF2-gamma C-terminal domain"/>
    <property type="match status" value="1"/>
</dbReference>
<dbReference type="SUPFAM" id="SSF52540">
    <property type="entry name" value="P-loop containing nucleoside triphosphate hydrolases"/>
    <property type="match status" value="1"/>
</dbReference>
<dbReference type="SUPFAM" id="SSF50447">
    <property type="entry name" value="Translation proteins"/>
    <property type="match status" value="1"/>
</dbReference>
<dbReference type="PROSITE" id="PS00301">
    <property type="entry name" value="G_TR_1"/>
    <property type="match status" value="1"/>
</dbReference>
<dbReference type="PROSITE" id="PS51722">
    <property type="entry name" value="G_TR_2"/>
    <property type="match status" value="1"/>
</dbReference>
<geneLocation type="chloroplast"/>
<name>EFTU_OLTVI</name>
<gene>
    <name type="primary">tufA</name>
</gene>
<accession>Q20EU5</accession>
<comment type="function">
    <text evidence="2">GTP hydrolase that promotes the GTP-dependent binding of aminoacyl-tRNA to the A-site of ribosomes during protein biosynthesis.</text>
</comment>
<comment type="catalytic activity">
    <reaction evidence="2">
        <text>GTP + H2O = GDP + phosphate + H(+)</text>
        <dbReference type="Rhea" id="RHEA:19669"/>
        <dbReference type="ChEBI" id="CHEBI:15377"/>
        <dbReference type="ChEBI" id="CHEBI:15378"/>
        <dbReference type="ChEBI" id="CHEBI:37565"/>
        <dbReference type="ChEBI" id="CHEBI:43474"/>
        <dbReference type="ChEBI" id="CHEBI:58189"/>
        <dbReference type="EC" id="3.6.5.3"/>
    </reaction>
    <physiologicalReaction direction="left-to-right" evidence="2">
        <dbReference type="Rhea" id="RHEA:19670"/>
    </physiologicalReaction>
</comment>
<comment type="subcellular location">
    <subcellularLocation>
        <location>Plastid</location>
        <location>Chloroplast</location>
    </subcellularLocation>
</comment>
<comment type="similarity">
    <text evidence="3">Belongs to the TRAFAC class translation factor GTPase superfamily. Classic translation factor GTPase family. EF-Tu/EF-1A subfamily.</text>
</comment>